<organism>
    <name type="scientific">Homo sapiens</name>
    <name type="common">Human</name>
    <dbReference type="NCBI Taxonomy" id="9606"/>
    <lineage>
        <taxon>Eukaryota</taxon>
        <taxon>Metazoa</taxon>
        <taxon>Chordata</taxon>
        <taxon>Craniata</taxon>
        <taxon>Vertebrata</taxon>
        <taxon>Euteleostomi</taxon>
        <taxon>Mammalia</taxon>
        <taxon>Eutheria</taxon>
        <taxon>Euarchontoglires</taxon>
        <taxon>Primates</taxon>
        <taxon>Haplorrhini</taxon>
        <taxon>Catarrhini</taxon>
        <taxon>Hominidae</taxon>
        <taxon>Homo</taxon>
    </lineage>
</organism>
<gene>
    <name type="primary">LRTM1</name>
    <name type="ORF">HT017</name>
</gene>
<sequence>MKGELLLFSSVIVLLQVVCSCPDKCYCQSSTNFVDCSQQGLAEIPSHLPPQTRTLHLQDNQIHHLPAFAFRSVPWLMTLNLSNNSLSNLAPGAFHGLQHLQVLNLTQNSLLSLESRLFHSLPQLRELDLSSNNISHLPTSLGETWENLTILAVQQNQLQQLDRALLESMPSVRLLLLKDNLWKCNCHLLGLKLWLEKFVYKGGLTDGIICESPDTWKGKDLLRIPHELYQPCPLPAPDPVSSQAQWPGSAHGVVLRPPENHNAGERELLECELKPKPRPANLRHAIATVIITGVVCGIVCLMMLAAAIYGCTYAAITAQYHGGPLAQTNDPGKVEEKERFDSSPA</sequence>
<keyword id="KW-0025">Alternative splicing</keyword>
<keyword id="KW-0325">Glycoprotein</keyword>
<keyword id="KW-0433">Leucine-rich repeat</keyword>
<keyword id="KW-0472">Membrane</keyword>
<keyword id="KW-1185">Reference proteome</keyword>
<keyword id="KW-0677">Repeat</keyword>
<keyword id="KW-0732">Signal</keyword>
<keyword id="KW-0812">Transmembrane</keyword>
<keyword id="KW-1133">Transmembrane helix</keyword>
<name>LRTM1_HUMAN</name>
<feature type="signal peptide" evidence="1">
    <location>
        <begin position="1"/>
        <end position="27"/>
    </location>
</feature>
<feature type="chain" id="PRO_0000279756" description="Leucine-rich repeat and transmembrane domain-containing protein 1">
    <location>
        <begin position="28"/>
        <end position="345"/>
    </location>
</feature>
<feature type="topological domain" description="Extracellular" evidence="1">
    <location>
        <begin position="28"/>
        <end position="288"/>
    </location>
</feature>
<feature type="transmembrane region" description="Helical" evidence="1">
    <location>
        <begin position="289"/>
        <end position="309"/>
    </location>
</feature>
<feature type="topological domain" description="Cytoplasmic" evidence="1">
    <location>
        <begin position="310"/>
        <end position="345"/>
    </location>
</feature>
<feature type="domain" description="LRRNT">
    <location>
        <begin position="28"/>
        <end position="50"/>
    </location>
</feature>
<feature type="repeat" description="LRR 1">
    <location>
        <begin position="51"/>
        <end position="72"/>
    </location>
</feature>
<feature type="repeat" description="LRR 2">
    <location>
        <begin position="75"/>
        <end position="96"/>
    </location>
</feature>
<feature type="repeat" description="LRR 3">
    <location>
        <begin position="99"/>
        <end position="120"/>
    </location>
</feature>
<feature type="repeat" description="LRR 4">
    <location>
        <begin position="123"/>
        <end position="144"/>
    </location>
</feature>
<feature type="repeat" description="LRR 5">
    <location>
        <begin position="147"/>
        <end position="168"/>
    </location>
</feature>
<feature type="domain" description="LRRCT">
    <location>
        <begin position="180"/>
        <end position="234"/>
    </location>
</feature>
<feature type="region of interest" description="Disordered" evidence="2">
    <location>
        <begin position="326"/>
        <end position="345"/>
    </location>
</feature>
<feature type="compositionally biased region" description="Basic and acidic residues" evidence="2">
    <location>
        <begin position="332"/>
        <end position="345"/>
    </location>
</feature>
<feature type="glycosylation site" description="N-linked (GlcNAc...) asparagine" evidence="1">
    <location>
        <position position="104"/>
    </location>
</feature>
<feature type="glycosylation site" description="N-linked (GlcNAc...) asparagine" evidence="1">
    <location>
        <position position="147"/>
    </location>
</feature>
<feature type="splice variant" id="VSP_023507" description="In isoform 2." evidence="3">
    <location>
        <begin position="1"/>
        <end position="76"/>
    </location>
</feature>
<feature type="sequence variant" id="VAR_051144" description="In dbSNP:rs3806633.">
    <original>E</original>
    <variation>K</variation>
    <location>
        <position position="43"/>
    </location>
</feature>
<feature type="sequence variant" id="VAR_051145" description="In dbSNP:rs35540470.">
    <original>L</original>
    <variation>V</variation>
    <location>
        <position position="117"/>
    </location>
</feature>
<protein>
    <recommendedName>
        <fullName>Leucine-rich repeat and transmembrane domain-containing protein 1</fullName>
    </recommendedName>
</protein>
<accession>Q9HBL6</accession>
<accession>Q8IUU2</accession>
<reference key="1">
    <citation type="journal article" date="2000" name="Proc. Natl. Acad. Sci. U.S.A.">
        <title>Gene expression profiling in the human hypothalamus-pituitary-adrenal axis and full-length cDNA cloning.</title>
        <authorList>
            <person name="Hu R.-M."/>
            <person name="Han Z.-G."/>
            <person name="Song H.-D."/>
            <person name="Peng Y.-D."/>
            <person name="Huang Q.-H."/>
            <person name="Ren S.-X."/>
            <person name="Gu Y.-J."/>
            <person name="Huang C.-H."/>
            <person name="Li Y.-B."/>
            <person name="Jiang C.-L."/>
            <person name="Fu G."/>
            <person name="Zhang Q.-H."/>
            <person name="Gu B.-W."/>
            <person name="Dai M."/>
            <person name="Mao Y.-F."/>
            <person name="Gao G.-F."/>
            <person name="Rong R."/>
            <person name="Ye M."/>
            <person name="Zhou J."/>
            <person name="Xu S.-H."/>
            <person name="Gu J."/>
            <person name="Shi J.-X."/>
            <person name="Jin W.-R."/>
            <person name="Zhang C.-K."/>
            <person name="Wu T.-M."/>
            <person name="Huang G.-Y."/>
            <person name="Chen Z."/>
            <person name="Chen M.-D."/>
            <person name="Chen J.-L."/>
        </authorList>
    </citation>
    <scope>NUCLEOTIDE SEQUENCE [LARGE SCALE MRNA] (ISOFORM 1)</scope>
    <source>
        <tissue>Hypothalamus</tissue>
    </source>
</reference>
<reference key="2">
    <citation type="journal article" date="2004" name="Genome Res.">
        <title>The status, quality, and expansion of the NIH full-length cDNA project: the Mammalian Gene Collection (MGC).</title>
        <authorList>
            <consortium name="The MGC Project Team"/>
        </authorList>
    </citation>
    <scope>NUCLEOTIDE SEQUENCE [LARGE SCALE MRNA] (ISOFORMS 1 AND 2)</scope>
    <source>
        <tissue>Fetal brain</tissue>
        <tissue>Pancreas</tissue>
    </source>
</reference>
<proteinExistence type="evidence at protein level"/>
<dbReference type="EMBL" id="AF225421">
    <property type="protein sequence ID" value="AAG09723.1"/>
    <property type="molecule type" value="mRNA"/>
</dbReference>
<dbReference type="EMBL" id="BC040732">
    <property type="protein sequence ID" value="AAH40732.1"/>
    <property type="molecule type" value="mRNA"/>
</dbReference>
<dbReference type="EMBL" id="BC074741">
    <property type="protein sequence ID" value="AAH74741.1"/>
    <property type="molecule type" value="mRNA"/>
</dbReference>
<dbReference type="CCDS" id="CCDS2876.1">
    <molecule id="Q9HBL6-1"/>
</dbReference>
<dbReference type="CCDS" id="CCDS77753.1">
    <molecule id="Q9HBL6-2"/>
</dbReference>
<dbReference type="RefSeq" id="NP_001291318.1">
    <molecule id="Q9HBL6-2"/>
    <property type="nucleotide sequence ID" value="NM_001304389.2"/>
</dbReference>
<dbReference type="RefSeq" id="NP_065729.1">
    <molecule id="Q9HBL6-1"/>
    <property type="nucleotide sequence ID" value="NM_020678.4"/>
</dbReference>
<dbReference type="SMR" id="Q9HBL6"/>
<dbReference type="BioGRID" id="121510">
    <property type="interactions" value="9"/>
</dbReference>
<dbReference type="FunCoup" id="Q9HBL6">
    <property type="interactions" value="2"/>
</dbReference>
<dbReference type="IntAct" id="Q9HBL6">
    <property type="interactions" value="6"/>
</dbReference>
<dbReference type="STRING" id="9606.ENSP00000273286"/>
<dbReference type="GlyCosmos" id="Q9HBL6">
    <property type="glycosylation" value="2 sites, No reported glycans"/>
</dbReference>
<dbReference type="GlyGen" id="Q9HBL6">
    <property type="glycosylation" value="2 sites"/>
</dbReference>
<dbReference type="iPTMnet" id="Q9HBL6"/>
<dbReference type="PhosphoSitePlus" id="Q9HBL6"/>
<dbReference type="BioMuta" id="LRTM1"/>
<dbReference type="DMDM" id="74761612"/>
<dbReference type="jPOST" id="Q9HBL6"/>
<dbReference type="PaxDb" id="9606-ENSP00000273286"/>
<dbReference type="PeptideAtlas" id="Q9HBL6"/>
<dbReference type="ProteomicsDB" id="81569">
    <molecule id="Q9HBL6-1"/>
</dbReference>
<dbReference type="ProteomicsDB" id="81570">
    <molecule id="Q9HBL6-2"/>
</dbReference>
<dbReference type="Antibodypedia" id="2503">
    <property type="antibodies" value="51 antibodies from 11 providers"/>
</dbReference>
<dbReference type="DNASU" id="57408"/>
<dbReference type="Ensembl" id="ENST00000273286.6">
    <molecule id="Q9HBL6-1"/>
    <property type="protein sequence ID" value="ENSP00000273286.5"/>
    <property type="gene ID" value="ENSG00000144771.8"/>
</dbReference>
<dbReference type="Ensembl" id="ENST00000493075.1">
    <molecule id="Q9HBL6-2"/>
    <property type="protein sequence ID" value="ENSP00000419772.1"/>
    <property type="gene ID" value="ENSG00000144771.8"/>
</dbReference>
<dbReference type="GeneID" id="57408"/>
<dbReference type="KEGG" id="hsa:57408"/>
<dbReference type="MANE-Select" id="ENST00000273286.6">
    <property type="protein sequence ID" value="ENSP00000273286.5"/>
    <property type="RefSeq nucleotide sequence ID" value="NM_020678.4"/>
    <property type="RefSeq protein sequence ID" value="NP_065729.1"/>
</dbReference>
<dbReference type="UCSC" id="uc003dhl.4">
    <molecule id="Q9HBL6-1"/>
    <property type="organism name" value="human"/>
</dbReference>
<dbReference type="AGR" id="HGNC:25023"/>
<dbReference type="CTD" id="57408"/>
<dbReference type="DisGeNET" id="57408"/>
<dbReference type="GeneCards" id="LRTM1"/>
<dbReference type="HGNC" id="HGNC:25023">
    <property type="gene designation" value="LRTM1"/>
</dbReference>
<dbReference type="HPA" id="ENSG00000144771">
    <property type="expression patterns" value="Tissue enhanced (retina, skeletal muscle)"/>
</dbReference>
<dbReference type="neXtProt" id="NX_Q9HBL6"/>
<dbReference type="OpenTargets" id="ENSG00000144771"/>
<dbReference type="PharmGKB" id="PA142671499"/>
<dbReference type="VEuPathDB" id="HostDB:ENSG00000144771"/>
<dbReference type="eggNOG" id="KOG0619">
    <property type="taxonomic scope" value="Eukaryota"/>
</dbReference>
<dbReference type="GeneTree" id="ENSGT00940000158933"/>
<dbReference type="HOGENOM" id="CLU_038584_0_0_1"/>
<dbReference type="InParanoid" id="Q9HBL6"/>
<dbReference type="OMA" id="ITAKYHR"/>
<dbReference type="OrthoDB" id="1394818at2759"/>
<dbReference type="PAN-GO" id="Q9HBL6">
    <property type="GO annotations" value="4 GO annotations based on evolutionary models"/>
</dbReference>
<dbReference type="PhylomeDB" id="Q9HBL6"/>
<dbReference type="TreeFam" id="TF351114"/>
<dbReference type="PathwayCommons" id="Q9HBL6"/>
<dbReference type="SignaLink" id="Q9HBL6"/>
<dbReference type="BioGRID-ORCS" id="57408">
    <property type="hits" value="13 hits in 1141 CRISPR screens"/>
</dbReference>
<dbReference type="GenomeRNAi" id="57408"/>
<dbReference type="Pharos" id="Q9HBL6">
    <property type="development level" value="Tdark"/>
</dbReference>
<dbReference type="PRO" id="PR:Q9HBL6"/>
<dbReference type="Proteomes" id="UP000005640">
    <property type="component" value="Chromosome 3"/>
</dbReference>
<dbReference type="RNAct" id="Q9HBL6">
    <property type="molecule type" value="protein"/>
</dbReference>
<dbReference type="Bgee" id="ENSG00000144771">
    <property type="expression patterns" value="Expressed in pineal body and 41 other cell types or tissues"/>
</dbReference>
<dbReference type="GO" id="GO:0016020">
    <property type="term" value="C:membrane"/>
    <property type="evidence" value="ECO:0007669"/>
    <property type="project" value="UniProtKB-SubCell"/>
</dbReference>
<dbReference type="FunFam" id="3.80.10.10:FF:000382">
    <property type="entry name" value="Leucine rich repeats and transmembrane domains 1"/>
    <property type="match status" value="1"/>
</dbReference>
<dbReference type="FunFam" id="3.80.10.10:FF:000503">
    <property type="entry name" value="Leucine rich repeats and transmembrane domains 1"/>
    <property type="match status" value="1"/>
</dbReference>
<dbReference type="Gene3D" id="3.80.10.10">
    <property type="entry name" value="Ribonuclease Inhibitor"/>
    <property type="match status" value="2"/>
</dbReference>
<dbReference type="InterPro" id="IPR000483">
    <property type="entry name" value="Cys-rich_flank_reg_C"/>
</dbReference>
<dbReference type="InterPro" id="IPR001611">
    <property type="entry name" value="Leu-rich_rpt"/>
</dbReference>
<dbReference type="InterPro" id="IPR003591">
    <property type="entry name" value="Leu-rich_rpt_typical-subtyp"/>
</dbReference>
<dbReference type="InterPro" id="IPR032675">
    <property type="entry name" value="LRR_dom_sf"/>
</dbReference>
<dbReference type="InterPro" id="IPR050541">
    <property type="entry name" value="LRR_TM_domain-containing"/>
</dbReference>
<dbReference type="PANTHER" id="PTHR24369">
    <property type="entry name" value="ANTIGEN BSP, PUTATIVE-RELATED"/>
    <property type="match status" value="1"/>
</dbReference>
<dbReference type="PANTHER" id="PTHR24369:SF210">
    <property type="entry name" value="CHAOPTIN-RELATED"/>
    <property type="match status" value="1"/>
</dbReference>
<dbReference type="Pfam" id="PF13855">
    <property type="entry name" value="LRR_8"/>
    <property type="match status" value="1"/>
</dbReference>
<dbReference type="PRINTS" id="PR00019">
    <property type="entry name" value="LEURICHRPT"/>
</dbReference>
<dbReference type="SMART" id="SM00369">
    <property type="entry name" value="LRR_TYP"/>
    <property type="match status" value="5"/>
</dbReference>
<dbReference type="SMART" id="SM00082">
    <property type="entry name" value="LRRCT"/>
    <property type="match status" value="1"/>
</dbReference>
<dbReference type="SUPFAM" id="SSF52058">
    <property type="entry name" value="L domain-like"/>
    <property type="match status" value="1"/>
</dbReference>
<dbReference type="PROSITE" id="PS51450">
    <property type="entry name" value="LRR"/>
    <property type="match status" value="5"/>
</dbReference>
<evidence type="ECO:0000255" key="1"/>
<evidence type="ECO:0000256" key="2">
    <source>
        <dbReference type="SAM" id="MobiDB-lite"/>
    </source>
</evidence>
<evidence type="ECO:0000303" key="3">
    <source>
    </source>
</evidence>
<evidence type="ECO:0000305" key="4"/>
<comment type="interaction">
    <interactant intactId="EBI-12825005">
        <id>Q9HBL6</id>
    </interactant>
    <interactant intactId="EBI-3932027">
        <id>P21145</id>
        <label>MAL</label>
    </interactant>
    <organismsDiffer>false</organismsDiffer>
    <experiments>3</experiments>
</comment>
<comment type="subcellular location">
    <subcellularLocation>
        <location evidence="4">Membrane</location>
        <topology evidence="4">Single-pass type I membrane protein</topology>
    </subcellularLocation>
</comment>
<comment type="alternative products">
    <event type="alternative splicing"/>
    <isoform>
        <id>Q9HBL6-1</id>
        <name>1</name>
        <sequence type="displayed"/>
    </isoform>
    <isoform>
        <id>Q9HBL6-2</id>
        <name>2</name>
        <sequence type="described" ref="VSP_023507"/>
    </isoform>
</comment>